<name>RS21_SALPC</name>
<proteinExistence type="inferred from homology"/>
<comment type="similarity">
    <text evidence="1">Belongs to the bacterial ribosomal protein bS21 family.</text>
</comment>
<evidence type="ECO:0000255" key="1">
    <source>
        <dbReference type="HAMAP-Rule" id="MF_00358"/>
    </source>
</evidence>
<evidence type="ECO:0000256" key="2">
    <source>
        <dbReference type="SAM" id="MobiDB-lite"/>
    </source>
</evidence>
<evidence type="ECO:0000305" key="3"/>
<accession>C0PYY2</accession>
<sequence>MPVIKVRENEPFDVALRRFKRSCEKAGVLAEVRRREFYEKPTTERKRAKASAVKRHAKKLARENARRTRLY</sequence>
<reference key="1">
    <citation type="journal article" date="2009" name="PLoS ONE">
        <title>Salmonella paratyphi C: genetic divergence from Salmonella choleraesuis and pathogenic convergence with Salmonella typhi.</title>
        <authorList>
            <person name="Liu W.-Q."/>
            <person name="Feng Y."/>
            <person name="Wang Y."/>
            <person name="Zou Q.-H."/>
            <person name="Chen F."/>
            <person name="Guo J.-T."/>
            <person name="Peng Y.-H."/>
            <person name="Jin Y."/>
            <person name="Li Y.-G."/>
            <person name="Hu S.-N."/>
            <person name="Johnston R.N."/>
            <person name="Liu G.-R."/>
            <person name="Liu S.-L."/>
        </authorList>
    </citation>
    <scope>NUCLEOTIDE SEQUENCE [LARGE SCALE GENOMIC DNA]</scope>
    <source>
        <strain>RKS4594</strain>
    </source>
</reference>
<protein>
    <recommendedName>
        <fullName evidence="1">Small ribosomal subunit protein bS21</fullName>
    </recommendedName>
    <alternativeName>
        <fullName evidence="3">30S ribosomal protein S21</fullName>
    </alternativeName>
</protein>
<organism>
    <name type="scientific">Salmonella paratyphi C (strain RKS4594)</name>
    <dbReference type="NCBI Taxonomy" id="476213"/>
    <lineage>
        <taxon>Bacteria</taxon>
        <taxon>Pseudomonadati</taxon>
        <taxon>Pseudomonadota</taxon>
        <taxon>Gammaproteobacteria</taxon>
        <taxon>Enterobacterales</taxon>
        <taxon>Enterobacteriaceae</taxon>
        <taxon>Salmonella</taxon>
    </lineage>
</organism>
<feature type="chain" id="PRO_1000133486" description="Small ribosomal subunit protein bS21">
    <location>
        <begin position="1"/>
        <end position="71"/>
    </location>
</feature>
<feature type="region of interest" description="Disordered" evidence="2">
    <location>
        <begin position="43"/>
        <end position="71"/>
    </location>
</feature>
<feature type="compositionally biased region" description="Basic residues" evidence="2">
    <location>
        <begin position="46"/>
        <end position="59"/>
    </location>
</feature>
<feature type="compositionally biased region" description="Basic and acidic residues" evidence="2">
    <location>
        <begin position="60"/>
        <end position="71"/>
    </location>
</feature>
<keyword id="KW-0687">Ribonucleoprotein</keyword>
<keyword id="KW-0689">Ribosomal protein</keyword>
<gene>
    <name evidence="1" type="primary">rpsU</name>
    <name type="ordered locus">SPC_3285</name>
</gene>
<dbReference type="EMBL" id="CP000857">
    <property type="protein sequence ID" value="ACN47370.1"/>
    <property type="molecule type" value="Genomic_DNA"/>
</dbReference>
<dbReference type="RefSeq" id="WP_001144069.1">
    <property type="nucleotide sequence ID" value="NC_012125.1"/>
</dbReference>
<dbReference type="SMR" id="C0PYY2"/>
<dbReference type="GeneID" id="98390195"/>
<dbReference type="KEGG" id="sei:SPC_3285"/>
<dbReference type="HOGENOM" id="CLU_159258_1_0_6"/>
<dbReference type="Proteomes" id="UP000001599">
    <property type="component" value="Chromosome"/>
</dbReference>
<dbReference type="GO" id="GO:1990904">
    <property type="term" value="C:ribonucleoprotein complex"/>
    <property type="evidence" value="ECO:0007669"/>
    <property type="project" value="UniProtKB-KW"/>
</dbReference>
<dbReference type="GO" id="GO:0005840">
    <property type="term" value="C:ribosome"/>
    <property type="evidence" value="ECO:0007669"/>
    <property type="project" value="UniProtKB-KW"/>
</dbReference>
<dbReference type="GO" id="GO:0003735">
    <property type="term" value="F:structural constituent of ribosome"/>
    <property type="evidence" value="ECO:0007669"/>
    <property type="project" value="InterPro"/>
</dbReference>
<dbReference type="GO" id="GO:0006412">
    <property type="term" value="P:translation"/>
    <property type="evidence" value="ECO:0007669"/>
    <property type="project" value="UniProtKB-UniRule"/>
</dbReference>
<dbReference type="FunFam" id="1.20.5.1150:FF:000001">
    <property type="entry name" value="30S ribosomal protein S21"/>
    <property type="match status" value="1"/>
</dbReference>
<dbReference type="Gene3D" id="1.20.5.1150">
    <property type="entry name" value="Ribosomal protein S8"/>
    <property type="match status" value="1"/>
</dbReference>
<dbReference type="HAMAP" id="MF_00358">
    <property type="entry name" value="Ribosomal_bS21"/>
    <property type="match status" value="1"/>
</dbReference>
<dbReference type="InterPro" id="IPR001911">
    <property type="entry name" value="Ribosomal_bS21"/>
</dbReference>
<dbReference type="InterPro" id="IPR018278">
    <property type="entry name" value="Ribosomal_bS21_CS"/>
</dbReference>
<dbReference type="InterPro" id="IPR038380">
    <property type="entry name" value="Ribosomal_bS21_sf"/>
</dbReference>
<dbReference type="NCBIfam" id="TIGR00030">
    <property type="entry name" value="S21p"/>
    <property type="match status" value="1"/>
</dbReference>
<dbReference type="PANTHER" id="PTHR21109">
    <property type="entry name" value="MITOCHONDRIAL 28S RIBOSOMAL PROTEIN S21"/>
    <property type="match status" value="1"/>
</dbReference>
<dbReference type="PANTHER" id="PTHR21109:SF22">
    <property type="entry name" value="SMALL RIBOSOMAL SUBUNIT PROTEIN BS21"/>
    <property type="match status" value="1"/>
</dbReference>
<dbReference type="Pfam" id="PF01165">
    <property type="entry name" value="Ribosomal_S21"/>
    <property type="match status" value="1"/>
</dbReference>
<dbReference type="PRINTS" id="PR00976">
    <property type="entry name" value="RIBOSOMALS21"/>
</dbReference>
<dbReference type="PROSITE" id="PS01181">
    <property type="entry name" value="RIBOSOMAL_S21"/>
    <property type="match status" value="1"/>
</dbReference>